<dbReference type="EMBL" id="CP000440">
    <property type="protein sequence ID" value="ABI85830.1"/>
    <property type="molecule type" value="Genomic_DNA"/>
</dbReference>
<dbReference type="RefSeq" id="WP_006482900.1">
    <property type="nucleotide sequence ID" value="NZ_CP009798.1"/>
</dbReference>
<dbReference type="SMR" id="Q0BJ43"/>
<dbReference type="GeneID" id="93193448"/>
<dbReference type="KEGG" id="bam:Bamb_0270"/>
<dbReference type="PATRIC" id="fig|339670.21.peg.1350"/>
<dbReference type="eggNOG" id="COG0090">
    <property type="taxonomic scope" value="Bacteria"/>
</dbReference>
<dbReference type="Proteomes" id="UP000000662">
    <property type="component" value="Chromosome 1"/>
</dbReference>
<dbReference type="GO" id="GO:0015934">
    <property type="term" value="C:large ribosomal subunit"/>
    <property type="evidence" value="ECO:0007669"/>
    <property type="project" value="InterPro"/>
</dbReference>
<dbReference type="GO" id="GO:0019843">
    <property type="term" value="F:rRNA binding"/>
    <property type="evidence" value="ECO:0007669"/>
    <property type="project" value="UniProtKB-UniRule"/>
</dbReference>
<dbReference type="GO" id="GO:0003735">
    <property type="term" value="F:structural constituent of ribosome"/>
    <property type="evidence" value="ECO:0007669"/>
    <property type="project" value="InterPro"/>
</dbReference>
<dbReference type="GO" id="GO:0016740">
    <property type="term" value="F:transferase activity"/>
    <property type="evidence" value="ECO:0007669"/>
    <property type="project" value="InterPro"/>
</dbReference>
<dbReference type="GO" id="GO:0002181">
    <property type="term" value="P:cytoplasmic translation"/>
    <property type="evidence" value="ECO:0007669"/>
    <property type="project" value="TreeGrafter"/>
</dbReference>
<dbReference type="FunFam" id="2.30.30.30:FF:000001">
    <property type="entry name" value="50S ribosomal protein L2"/>
    <property type="match status" value="1"/>
</dbReference>
<dbReference type="FunFam" id="2.40.50.140:FF:000003">
    <property type="entry name" value="50S ribosomal protein L2"/>
    <property type="match status" value="1"/>
</dbReference>
<dbReference type="FunFam" id="4.10.950.10:FF:000001">
    <property type="entry name" value="50S ribosomal protein L2"/>
    <property type="match status" value="1"/>
</dbReference>
<dbReference type="Gene3D" id="2.30.30.30">
    <property type="match status" value="1"/>
</dbReference>
<dbReference type="Gene3D" id="2.40.50.140">
    <property type="entry name" value="Nucleic acid-binding proteins"/>
    <property type="match status" value="1"/>
</dbReference>
<dbReference type="Gene3D" id="4.10.950.10">
    <property type="entry name" value="Ribosomal protein L2, domain 3"/>
    <property type="match status" value="1"/>
</dbReference>
<dbReference type="HAMAP" id="MF_01320_B">
    <property type="entry name" value="Ribosomal_uL2_B"/>
    <property type="match status" value="1"/>
</dbReference>
<dbReference type="InterPro" id="IPR012340">
    <property type="entry name" value="NA-bd_OB-fold"/>
</dbReference>
<dbReference type="InterPro" id="IPR014722">
    <property type="entry name" value="Rib_uL2_dom2"/>
</dbReference>
<dbReference type="InterPro" id="IPR002171">
    <property type="entry name" value="Ribosomal_uL2"/>
</dbReference>
<dbReference type="InterPro" id="IPR005880">
    <property type="entry name" value="Ribosomal_uL2_bac/org-type"/>
</dbReference>
<dbReference type="InterPro" id="IPR022669">
    <property type="entry name" value="Ribosomal_uL2_C"/>
</dbReference>
<dbReference type="InterPro" id="IPR022671">
    <property type="entry name" value="Ribosomal_uL2_CS"/>
</dbReference>
<dbReference type="InterPro" id="IPR014726">
    <property type="entry name" value="Ribosomal_uL2_dom3"/>
</dbReference>
<dbReference type="InterPro" id="IPR022666">
    <property type="entry name" value="Ribosomal_uL2_RNA-bd_dom"/>
</dbReference>
<dbReference type="InterPro" id="IPR008991">
    <property type="entry name" value="Translation_prot_SH3-like_sf"/>
</dbReference>
<dbReference type="NCBIfam" id="TIGR01171">
    <property type="entry name" value="rplB_bact"/>
    <property type="match status" value="1"/>
</dbReference>
<dbReference type="PANTHER" id="PTHR13691:SF5">
    <property type="entry name" value="LARGE RIBOSOMAL SUBUNIT PROTEIN UL2M"/>
    <property type="match status" value="1"/>
</dbReference>
<dbReference type="PANTHER" id="PTHR13691">
    <property type="entry name" value="RIBOSOMAL PROTEIN L2"/>
    <property type="match status" value="1"/>
</dbReference>
<dbReference type="Pfam" id="PF00181">
    <property type="entry name" value="Ribosomal_L2"/>
    <property type="match status" value="1"/>
</dbReference>
<dbReference type="Pfam" id="PF03947">
    <property type="entry name" value="Ribosomal_L2_C"/>
    <property type="match status" value="1"/>
</dbReference>
<dbReference type="PIRSF" id="PIRSF002158">
    <property type="entry name" value="Ribosomal_L2"/>
    <property type="match status" value="1"/>
</dbReference>
<dbReference type="SMART" id="SM01383">
    <property type="entry name" value="Ribosomal_L2"/>
    <property type="match status" value="1"/>
</dbReference>
<dbReference type="SMART" id="SM01382">
    <property type="entry name" value="Ribosomal_L2_C"/>
    <property type="match status" value="1"/>
</dbReference>
<dbReference type="SUPFAM" id="SSF50249">
    <property type="entry name" value="Nucleic acid-binding proteins"/>
    <property type="match status" value="1"/>
</dbReference>
<dbReference type="SUPFAM" id="SSF50104">
    <property type="entry name" value="Translation proteins SH3-like domain"/>
    <property type="match status" value="1"/>
</dbReference>
<dbReference type="PROSITE" id="PS00467">
    <property type="entry name" value="RIBOSOMAL_L2"/>
    <property type="match status" value="1"/>
</dbReference>
<reference key="1">
    <citation type="submission" date="2006-08" db="EMBL/GenBank/DDBJ databases">
        <title>Complete sequence of chromosome 1 of Burkholderia cepacia AMMD.</title>
        <authorList>
            <person name="Copeland A."/>
            <person name="Lucas S."/>
            <person name="Lapidus A."/>
            <person name="Barry K."/>
            <person name="Detter J.C."/>
            <person name="Glavina del Rio T."/>
            <person name="Hammon N."/>
            <person name="Israni S."/>
            <person name="Pitluck S."/>
            <person name="Bruce D."/>
            <person name="Chain P."/>
            <person name="Malfatti S."/>
            <person name="Shin M."/>
            <person name="Vergez L."/>
            <person name="Schmutz J."/>
            <person name="Larimer F."/>
            <person name="Land M."/>
            <person name="Hauser L."/>
            <person name="Kyrpides N."/>
            <person name="Kim E."/>
            <person name="Parke J."/>
            <person name="Coenye T."/>
            <person name="Konstantinidis K."/>
            <person name="Ramette A."/>
            <person name="Tiedje J."/>
            <person name="Richardson P."/>
        </authorList>
    </citation>
    <scope>NUCLEOTIDE SEQUENCE [LARGE SCALE GENOMIC DNA]</scope>
    <source>
        <strain>ATCC BAA-244 / DSM 16087 / CCUG 44356 / LMG 19182 / AMMD</strain>
    </source>
</reference>
<protein>
    <recommendedName>
        <fullName evidence="1">Large ribosomal subunit protein uL2</fullName>
    </recommendedName>
    <alternativeName>
        <fullName evidence="3">50S ribosomal protein L2</fullName>
    </alternativeName>
</protein>
<feature type="chain" id="PRO_0000309882" description="Large ribosomal subunit protein uL2">
    <location>
        <begin position="1"/>
        <end position="275"/>
    </location>
</feature>
<feature type="region of interest" description="Disordered" evidence="2">
    <location>
        <begin position="35"/>
        <end position="59"/>
    </location>
</feature>
<feature type="region of interest" description="Disordered" evidence="2">
    <location>
        <begin position="224"/>
        <end position="275"/>
    </location>
</feature>
<feature type="compositionally biased region" description="Polar residues" evidence="2">
    <location>
        <begin position="35"/>
        <end position="49"/>
    </location>
</feature>
<feature type="compositionally biased region" description="Basic residues" evidence="2">
    <location>
        <begin position="50"/>
        <end position="59"/>
    </location>
</feature>
<accession>Q0BJ43</accession>
<gene>
    <name evidence="1" type="primary">rplB</name>
    <name type="ordered locus">Bamb_0270</name>
</gene>
<name>RL2_BURCM</name>
<sequence length="275" mass="30101">MAIVKVKPTSPGRRAMVKVVNKNLHQGKPFAALLDSQSSTAGRNNNGRITTRHKGGGHKQHYRIVDFRRTKDGIPAKVERLEYDPNRSANIALVLYADGERRYIIAPKGLTVGQQLMSGSEAPIRAGNTLPIRNIPVGTTIHCIEMLPGKGAQMARSAGTSAMLLAREGVYAQVRLRSGEIRRVHIECRATIGEVGNEEHSLRQIGKAGANRWRGIRPTVRGVAMNPVDHPHGGGEGKTAAGRDPVSPWGTPAKGYRTRSNKRTTTMIVQRRHKR</sequence>
<comment type="function">
    <text evidence="1">One of the primary rRNA binding proteins. Required for association of the 30S and 50S subunits to form the 70S ribosome, for tRNA binding and peptide bond formation. It has been suggested to have peptidyltransferase activity; this is somewhat controversial. Makes several contacts with the 16S rRNA in the 70S ribosome.</text>
</comment>
<comment type="subunit">
    <text evidence="1">Part of the 50S ribosomal subunit. Forms a bridge to the 30S subunit in the 70S ribosome.</text>
</comment>
<comment type="similarity">
    <text evidence="1">Belongs to the universal ribosomal protein uL2 family.</text>
</comment>
<keyword id="KW-0687">Ribonucleoprotein</keyword>
<keyword id="KW-0689">Ribosomal protein</keyword>
<keyword id="KW-0694">RNA-binding</keyword>
<keyword id="KW-0699">rRNA-binding</keyword>
<proteinExistence type="inferred from homology"/>
<evidence type="ECO:0000255" key="1">
    <source>
        <dbReference type="HAMAP-Rule" id="MF_01320"/>
    </source>
</evidence>
<evidence type="ECO:0000256" key="2">
    <source>
        <dbReference type="SAM" id="MobiDB-lite"/>
    </source>
</evidence>
<evidence type="ECO:0000305" key="3"/>
<organism>
    <name type="scientific">Burkholderia ambifaria (strain ATCC BAA-244 / DSM 16087 / CCUG 44356 / LMG 19182 / AMMD)</name>
    <name type="common">Burkholderia cepacia (strain AMMD)</name>
    <dbReference type="NCBI Taxonomy" id="339670"/>
    <lineage>
        <taxon>Bacteria</taxon>
        <taxon>Pseudomonadati</taxon>
        <taxon>Pseudomonadota</taxon>
        <taxon>Betaproteobacteria</taxon>
        <taxon>Burkholderiales</taxon>
        <taxon>Burkholderiaceae</taxon>
        <taxon>Burkholderia</taxon>
        <taxon>Burkholderia cepacia complex</taxon>
    </lineage>
</organism>